<organism>
    <name type="scientific">Saccharomyces cerevisiae (strain ATCC 204508 / S288c)</name>
    <name type="common">Baker's yeast</name>
    <dbReference type="NCBI Taxonomy" id="559292"/>
    <lineage>
        <taxon>Eukaryota</taxon>
        <taxon>Fungi</taxon>
        <taxon>Dikarya</taxon>
        <taxon>Ascomycota</taxon>
        <taxon>Saccharomycotina</taxon>
        <taxon>Saccharomycetes</taxon>
        <taxon>Saccharomycetales</taxon>
        <taxon>Saccharomycetaceae</taxon>
        <taxon>Saccharomyces</taxon>
    </lineage>
</organism>
<feature type="chain" id="PRO_0000299847" description="Putative uncharacterized protein YDL026W">
    <location>
        <begin position="1"/>
        <end position="103"/>
    </location>
</feature>
<feature type="transmembrane region" description="Helical" evidence="1">
    <location>
        <begin position="42"/>
        <end position="62"/>
    </location>
</feature>
<feature type="transmembrane region" description="Helical" evidence="1">
    <location>
        <begin position="65"/>
        <end position="85"/>
    </location>
</feature>
<dbReference type="EMBL" id="Z48432">
    <property type="protein sequence ID" value="CAA88333.1"/>
    <property type="molecule type" value="Genomic_DNA"/>
</dbReference>
<dbReference type="EMBL" id="Z74075">
    <property type="protein sequence ID" value="CAA98586.1"/>
    <property type="molecule type" value="Genomic_DNA"/>
</dbReference>
<dbReference type="EMBL" id="AY693282">
    <property type="protein sequence ID" value="AAT93301.1"/>
    <property type="molecule type" value="Genomic_DNA"/>
</dbReference>
<dbReference type="PIR" id="S52493">
    <property type="entry name" value="S52493"/>
</dbReference>
<dbReference type="SMR" id="Q12147"/>
<dbReference type="DIP" id="DIP-5227N"/>
<dbReference type="IntAct" id="Q12147">
    <property type="interactions" value="1"/>
</dbReference>
<dbReference type="STRING" id="4932.YDL026W"/>
<dbReference type="PaxDb" id="4932-YDL026W"/>
<dbReference type="TopDownProteomics" id="Q12147"/>
<dbReference type="EnsemblFungi" id="YDL026W_mRNA">
    <property type="protein sequence ID" value="YDL026W"/>
    <property type="gene ID" value="YDL026W"/>
</dbReference>
<dbReference type="AGR" id="SGD:S000002184"/>
<dbReference type="SGD" id="S000002184">
    <property type="gene designation" value="YDL026W"/>
</dbReference>
<dbReference type="HOGENOM" id="CLU_2265803_0_0_1"/>
<dbReference type="GO" id="GO:0016020">
    <property type="term" value="C:membrane"/>
    <property type="evidence" value="ECO:0007669"/>
    <property type="project" value="UniProtKB-SubCell"/>
</dbReference>
<gene>
    <name type="ordered locus">YDL026W</name>
</gene>
<proteinExistence type="uncertain"/>
<comment type="subcellular location">
    <subcellularLocation>
        <location evidence="2">Membrane</location>
        <topology evidence="2">Multi-pass membrane protein</topology>
    </subcellularLocation>
</comment>
<comment type="miscellaneous">
    <text evidence="2">Partially overlaps YDL027C.</text>
</comment>
<comment type="caution">
    <text evidence="3">Product of a dubious gene prediction unlikely to encode a functional protein. Because of that it is not part of the S.cerevisiae S288c complete/reference proteome set.</text>
</comment>
<name>YDL26_YEAST</name>
<keyword id="KW-0472">Membrane</keyword>
<keyword id="KW-0812">Transmembrane</keyword>
<keyword id="KW-1133">Transmembrane helix</keyword>
<protein>
    <recommendedName>
        <fullName>Putative uncharacterized protein YDL026W</fullName>
    </recommendedName>
</protein>
<reference key="1">
    <citation type="journal article" date="1997" name="Nature">
        <title>The nucleotide sequence of Saccharomyces cerevisiae chromosome IV.</title>
        <authorList>
            <person name="Jacq C."/>
            <person name="Alt-Moerbe J."/>
            <person name="Andre B."/>
            <person name="Arnold W."/>
            <person name="Bahr A."/>
            <person name="Ballesta J.P.G."/>
            <person name="Bargues M."/>
            <person name="Baron L."/>
            <person name="Becker A."/>
            <person name="Biteau N."/>
            <person name="Bloecker H."/>
            <person name="Blugeon C."/>
            <person name="Boskovic J."/>
            <person name="Brandt P."/>
            <person name="Brueckner M."/>
            <person name="Buitrago M.J."/>
            <person name="Coster F."/>
            <person name="Delaveau T."/>
            <person name="del Rey F."/>
            <person name="Dujon B."/>
            <person name="Eide L.G."/>
            <person name="Garcia-Cantalejo J.M."/>
            <person name="Goffeau A."/>
            <person name="Gomez-Peris A."/>
            <person name="Granotier C."/>
            <person name="Hanemann V."/>
            <person name="Hankeln T."/>
            <person name="Hoheisel J.D."/>
            <person name="Jaeger W."/>
            <person name="Jimenez A."/>
            <person name="Jonniaux J.-L."/>
            <person name="Kraemer C."/>
            <person name="Kuester H."/>
            <person name="Laamanen P."/>
            <person name="Legros Y."/>
            <person name="Louis E.J."/>
            <person name="Moeller-Rieker S."/>
            <person name="Monnet A."/>
            <person name="Moro M."/>
            <person name="Mueller-Auer S."/>
            <person name="Nussbaumer B."/>
            <person name="Paricio N."/>
            <person name="Paulin L."/>
            <person name="Perea J."/>
            <person name="Perez-Alonso M."/>
            <person name="Perez-Ortin J.E."/>
            <person name="Pohl T.M."/>
            <person name="Prydz H."/>
            <person name="Purnelle B."/>
            <person name="Rasmussen S.W."/>
            <person name="Remacha M.A."/>
            <person name="Revuelta J.L."/>
            <person name="Rieger M."/>
            <person name="Salom D."/>
            <person name="Saluz H.P."/>
            <person name="Saiz J.E."/>
            <person name="Saren A.-M."/>
            <person name="Schaefer M."/>
            <person name="Scharfe M."/>
            <person name="Schmidt E.R."/>
            <person name="Schneider C."/>
            <person name="Scholler P."/>
            <person name="Schwarz S."/>
            <person name="Soler-Mira A."/>
            <person name="Urrestarazu L.A."/>
            <person name="Verhasselt P."/>
            <person name="Vissers S."/>
            <person name="Voet M."/>
            <person name="Volckaert G."/>
            <person name="Wagner G."/>
            <person name="Wambutt R."/>
            <person name="Wedler E."/>
            <person name="Wedler H."/>
            <person name="Woelfl S."/>
            <person name="Harris D.E."/>
            <person name="Bowman S."/>
            <person name="Brown D."/>
            <person name="Churcher C.M."/>
            <person name="Connor R."/>
            <person name="Dedman K."/>
            <person name="Gentles S."/>
            <person name="Hamlin N."/>
            <person name="Hunt S."/>
            <person name="Jones L."/>
            <person name="McDonald S."/>
            <person name="Murphy L.D."/>
            <person name="Niblett D."/>
            <person name="Odell C."/>
            <person name="Oliver K."/>
            <person name="Rajandream M.A."/>
            <person name="Richards C."/>
            <person name="Shore L."/>
            <person name="Walsh S.V."/>
            <person name="Barrell B.G."/>
            <person name="Dietrich F.S."/>
            <person name="Mulligan J.T."/>
            <person name="Allen E."/>
            <person name="Araujo R."/>
            <person name="Aviles E."/>
            <person name="Berno A."/>
            <person name="Carpenter J."/>
            <person name="Chen E."/>
            <person name="Cherry J.M."/>
            <person name="Chung E."/>
            <person name="Duncan M."/>
            <person name="Hunicke-Smith S."/>
            <person name="Hyman R.W."/>
            <person name="Komp C."/>
            <person name="Lashkari D."/>
            <person name="Lew H."/>
            <person name="Lin D."/>
            <person name="Mosedale D."/>
            <person name="Nakahara K."/>
            <person name="Namath A."/>
            <person name="Oefner P."/>
            <person name="Oh C."/>
            <person name="Petel F.X."/>
            <person name="Roberts D."/>
            <person name="Schramm S."/>
            <person name="Schroeder M."/>
            <person name="Shogren T."/>
            <person name="Shroff N."/>
            <person name="Winant A."/>
            <person name="Yelton M.A."/>
            <person name="Botstein D."/>
            <person name="Davis R.W."/>
            <person name="Johnston M."/>
            <person name="Andrews S."/>
            <person name="Brinkman R."/>
            <person name="Cooper J."/>
            <person name="Ding H."/>
            <person name="Du Z."/>
            <person name="Favello A."/>
            <person name="Fulton L."/>
            <person name="Gattung S."/>
            <person name="Greco T."/>
            <person name="Hallsworth K."/>
            <person name="Hawkins J."/>
            <person name="Hillier L.W."/>
            <person name="Jier M."/>
            <person name="Johnson D."/>
            <person name="Johnston L."/>
            <person name="Kirsten J."/>
            <person name="Kucaba T."/>
            <person name="Langston Y."/>
            <person name="Latreille P."/>
            <person name="Le T."/>
            <person name="Mardis E."/>
            <person name="Menezes S."/>
            <person name="Miller N."/>
            <person name="Nhan M."/>
            <person name="Pauley A."/>
            <person name="Peluso D."/>
            <person name="Rifkin L."/>
            <person name="Riles L."/>
            <person name="Taich A."/>
            <person name="Trevaskis E."/>
            <person name="Vignati D."/>
            <person name="Wilcox L."/>
            <person name="Wohldman P."/>
            <person name="Vaudin M."/>
            <person name="Wilson R."/>
            <person name="Waterston R."/>
            <person name="Albermann K."/>
            <person name="Hani J."/>
            <person name="Heumann K."/>
            <person name="Kleine K."/>
            <person name="Mewes H.-W."/>
            <person name="Zollner A."/>
            <person name="Zaccaria P."/>
        </authorList>
    </citation>
    <scope>NUCLEOTIDE SEQUENCE [LARGE SCALE GENOMIC DNA]</scope>
    <source>
        <strain>ATCC 204508 / S288c</strain>
    </source>
</reference>
<reference key="2">
    <citation type="journal article" date="2014" name="G3 (Bethesda)">
        <title>The reference genome sequence of Saccharomyces cerevisiae: Then and now.</title>
        <authorList>
            <person name="Engel S.R."/>
            <person name="Dietrich F.S."/>
            <person name="Fisk D.G."/>
            <person name="Binkley G."/>
            <person name="Balakrishnan R."/>
            <person name="Costanzo M.C."/>
            <person name="Dwight S.S."/>
            <person name="Hitz B.C."/>
            <person name="Karra K."/>
            <person name="Nash R.S."/>
            <person name="Weng S."/>
            <person name="Wong E.D."/>
            <person name="Lloyd P."/>
            <person name="Skrzypek M.S."/>
            <person name="Miyasato S.R."/>
            <person name="Simison M."/>
            <person name="Cherry J.M."/>
        </authorList>
    </citation>
    <scope>GENOME REANNOTATION</scope>
    <source>
        <strain>ATCC 204508 / S288c</strain>
    </source>
</reference>
<reference key="3">
    <citation type="journal article" date="2007" name="Genome Res.">
        <title>Approaching a complete repository of sequence-verified protein-encoding clones for Saccharomyces cerevisiae.</title>
        <authorList>
            <person name="Hu Y."/>
            <person name="Rolfs A."/>
            <person name="Bhullar B."/>
            <person name="Murthy T.V.S."/>
            <person name="Zhu C."/>
            <person name="Berger M.F."/>
            <person name="Camargo A.A."/>
            <person name="Kelley F."/>
            <person name="McCarron S."/>
            <person name="Jepson D."/>
            <person name="Richardson A."/>
            <person name="Raphael J."/>
            <person name="Moreira D."/>
            <person name="Taycher E."/>
            <person name="Zuo D."/>
            <person name="Mohr S."/>
            <person name="Kane M.F."/>
            <person name="Williamson J."/>
            <person name="Simpson A.J.G."/>
            <person name="Bulyk M.L."/>
            <person name="Harlow E."/>
            <person name="Marsischky G."/>
            <person name="Kolodner R.D."/>
            <person name="LaBaer J."/>
        </authorList>
    </citation>
    <scope>NUCLEOTIDE SEQUENCE [GENOMIC DNA]</scope>
    <source>
        <strain>ATCC 204508 / S288c</strain>
    </source>
</reference>
<accession>Q12147</accession>
<sequence length="103" mass="11389">MHESLRNWKLSPRYFGIAGDVIAEGTGLGKALNIPGKYILKPFPLLRLLSVTLFISSLVLLANPTGTLNIFSYSYVVMVVLFICAKSLFNYSLQFIGEETSSL</sequence>
<evidence type="ECO:0000255" key="1"/>
<evidence type="ECO:0000305" key="2"/>
<evidence type="ECO:0000305" key="3">
    <source>
    </source>
</evidence>